<evidence type="ECO:0000255" key="1">
    <source>
        <dbReference type="HAMAP-Rule" id="MF_00152"/>
    </source>
</evidence>
<reference key="1">
    <citation type="journal article" date="2003" name="Nature">
        <title>Genome sequence of Bacillus cereus and comparative analysis with Bacillus anthracis.</title>
        <authorList>
            <person name="Ivanova N."/>
            <person name="Sorokin A."/>
            <person name="Anderson I."/>
            <person name="Galleron N."/>
            <person name="Candelon B."/>
            <person name="Kapatral V."/>
            <person name="Bhattacharyya A."/>
            <person name="Reznik G."/>
            <person name="Mikhailova N."/>
            <person name="Lapidus A."/>
            <person name="Chu L."/>
            <person name="Mazur M."/>
            <person name="Goltsman E."/>
            <person name="Larsen N."/>
            <person name="D'Souza M."/>
            <person name="Walunas T."/>
            <person name="Grechkin Y."/>
            <person name="Pusch G."/>
            <person name="Haselkorn R."/>
            <person name="Fonstein M."/>
            <person name="Ehrlich S.D."/>
            <person name="Overbeek R."/>
            <person name="Kyrpides N.C."/>
        </authorList>
    </citation>
    <scope>NUCLEOTIDE SEQUENCE [LARGE SCALE GENOMIC DNA]</scope>
    <source>
        <strain>ATCC 14579 / DSM 31 / CCUG 7414 / JCM 2152 / NBRC 15305 / NCIMB 9373 / NCTC 2599 / NRRL B-3711</strain>
    </source>
</reference>
<dbReference type="EC" id="3.1.21.2" evidence="1"/>
<dbReference type="EMBL" id="AE016877">
    <property type="protein sequence ID" value="AAP11196.1"/>
    <property type="molecule type" value="Genomic_DNA"/>
</dbReference>
<dbReference type="RefSeq" id="NP_833995.1">
    <property type="nucleotide sequence ID" value="NC_004722.1"/>
</dbReference>
<dbReference type="RefSeq" id="WP_000912460.1">
    <property type="nucleotide sequence ID" value="NZ_CP138336.1"/>
</dbReference>
<dbReference type="SMR" id="Q818H3"/>
<dbReference type="STRING" id="226900.BC_4282"/>
<dbReference type="KEGG" id="bce:BC4282"/>
<dbReference type="PATRIC" id="fig|226900.8.peg.4426"/>
<dbReference type="HOGENOM" id="CLU_025885_4_1_9"/>
<dbReference type="OrthoDB" id="9805666at2"/>
<dbReference type="Proteomes" id="UP000001417">
    <property type="component" value="Chromosome"/>
</dbReference>
<dbReference type="GO" id="GO:0008833">
    <property type="term" value="F:deoxyribonuclease IV (phage-T4-induced) activity"/>
    <property type="evidence" value="ECO:0007669"/>
    <property type="project" value="UniProtKB-UniRule"/>
</dbReference>
<dbReference type="GO" id="GO:0003677">
    <property type="term" value="F:DNA binding"/>
    <property type="evidence" value="ECO:0007669"/>
    <property type="project" value="InterPro"/>
</dbReference>
<dbReference type="GO" id="GO:0003906">
    <property type="term" value="F:DNA-(apurinic or apyrimidinic site) endonuclease activity"/>
    <property type="evidence" value="ECO:0000318"/>
    <property type="project" value="GO_Central"/>
</dbReference>
<dbReference type="GO" id="GO:0008081">
    <property type="term" value="F:phosphoric diester hydrolase activity"/>
    <property type="evidence" value="ECO:0000318"/>
    <property type="project" value="GO_Central"/>
</dbReference>
<dbReference type="GO" id="GO:0008270">
    <property type="term" value="F:zinc ion binding"/>
    <property type="evidence" value="ECO:0007669"/>
    <property type="project" value="UniProtKB-UniRule"/>
</dbReference>
<dbReference type="GO" id="GO:0006284">
    <property type="term" value="P:base-excision repair"/>
    <property type="evidence" value="ECO:0000318"/>
    <property type="project" value="GO_Central"/>
</dbReference>
<dbReference type="CDD" id="cd00019">
    <property type="entry name" value="AP2Ec"/>
    <property type="match status" value="1"/>
</dbReference>
<dbReference type="FunFam" id="3.20.20.150:FF:000001">
    <property type="entry name" value="Probable endonuclease 4"/>
    <property type="match status" value="1"/>
</dbReference>
<dbReference type="Gene3D" id="3.20.20.150">
    <property type="entry name" value="Divalent-metal-dependent TIM barrel enzymes"/>
    <property type="match status" value="1"/>
</dbReference>
<dbReference type="HAMAP" id="MF_00152">
    <property type="entry name" value="Nfo"/>
    <property type="match status" value="1"/>
</dbReference>
<dbReference type="InterPro" id="IPR001719">
    <property type="entry name" value="AP_endonuc_2"/>
</dbReference>
<dbReference type="InterPro" id="IPR018246">
    <property type="entry name" value="AP_endonuc_F2_Zn_BS"/>
</dbReference>
<dbReference type="InterPro" id="IPR036237">
    <property type="entry name" value="Xyl_isomerase-like_sf"/>
</dbReference>
<dbReference type="InterPro" id="IPR013022">
    <property type="entry name" value="Xyl_isomerase-like_TIM-brl"/>
</dbReference>
<dbReference type="NCBIfam" id="TIGR00587">
    <property type="entry name" value="nfo"/>
    <property type="match status" value="1"/>
</dbReference>
<dbReference type="NCBIfam" id="NF002196">
    <property type="entry name" value="PRK01060.1-1"/>
    <property type="match status" value="1"/>
</dbReference>
<dbReference type="PANTHER" id="PTHR21445:SF0">
    <property type="entry name" value="APURINIC-APYRIMIDINIC ENDONUCLEASE"/>
    <property type="match status" value="1"/>
</dbReference>
<dbReference type="PANTHER" id="PTHR21445">
    <property type="entry name" value="ENDONUCLEASE IV ENDODEOXYRIBONUCLEASE IV"/>
    <property type="match status" value="1"/>
</dbReference>
<dbReference type="Pfam" id="PF01261">
    <property type="entry name" value="AP_endonuc_2"/>
    <property type="match status" value="1"/>
</dbReference>
<dbReference type="SMART" id="SM00518">
    <property type="entry name" value="AP2Ec"/>
    <property type="match status" value="1"/>
</dbReference>
<dbReference type="SUPFAM" id="SSF51658">
    <property type="entry name" value="Xylose isomerase-like"/>
    <property type="match status" value="1"/>
</dbReference>
<dbReference type="PROSITE" id="PS00729">
    <property type="entry name" value="AP_NUCLEASE_F2_1"/>
    <property type="match status" value="1"/>
</dbReference>
<dbReference type="PROSITE" id="PS00730">
    <property type="entry name" value="AP_NUCLEASE_F2_2"/>
    <property type="match status" value="1"/>
</dbReference>
<dbReference type="PROSITE" id="PS00731">
    <property type="entry name" value="AP_NUCLEASE_F2_3"/>
    <property type="match status" value="1"/>
</dbReference>
<dbReference type="PROSITE" id="PS51432">
    <property type="entry name" value="AP_NUCLEASE_F2_4"/>
    <property type="match status" value="1"/>
</dbReference>
<accession>Q818H3</accession>
<keyword id="KW-0227">DNA damage</keyword>
<keyword id="KW-0234">DNA repair</keyword>
<keyword id="KW-0255">Endonuclease</keyword>
<keyword id="KW-0378">Hydrolase</keyword>
<keyword id="KW-0479">Metal-binding</keyword>
<keyword id="KW-0540">Nuclease</keyword>
<keyword id="KW-1185">Reference proteome</keyword>
<keyword id="KW-0862">Zinc</keyword>
<organism>
    <name type="scientific">Bacillus cereus (strain ATCC 14579 / DSM 31 / CCUG 7414 / JCM 2152 / NBRC 15305 / NCIMB 9373 / NCTC 2599 / NRRL B-3711)</name>
    <dbReference type="NCBI Taxonomy" id="226900"/>
    <lineage>
        <taxon>Bacteria</taxon>
        <taxon>Bacillati</taxon>
        <taxon>Bacillota</taxon>
        <taxon>Bacilli</taxon>
        <taxon>Bacillales</taxon>
        <taxon>Bacillaceae</taxon>
        <taxon>Bacillus</taxon>
        <taxon>Bacillus cereus group</taxon>
    </lineage>
</organism>
<comment type="function">
    <text evidence="1">Endonuclease IV plays a role in DNA repair. It cleaves phosphodiester bonds at apurinic or apyrimidinic (AP) sites, generating a 3'-hydroxyl group and a 5'-terminal sugar phosphate.</text>
</comment>
<comment type="catalytic activity">
    <reaction evidence="1">
        <text>Endonucleolytic cleavage to 5'-phosphooligonucleotide end-products.</text>
        <dbReference type="EC" id="3.1.21.2"/>
    </reaction>
</comment>
<comment type="cofactor">
    <cofactor evidence="1">
        <name>Zn(2+)</name>
        <dbReference type="ChEBI" id="CHEBI:29105"/>
    </cofactor>
    <text evidence="1">Binds 3 Zn(2+) ions.</text>
</comment>
<comment type="similarity">
    <text evidence="1">Belongs to the AP endonuclease 2 family.</text>
</comment>
<feature type="chain" id="PRO_0000190820" description="Probable endonuclease 4">
    <location>
        <begin position="1"/>
        <end position="298"/>
    </location>
</feature>
<feature type="binding site" evidence="1">
    <location>
        <position position="69"/>
    </location>
    <ligand>
        <name>Zn(2+)</name>
        <dbReference type="ChEBI" id="CHEBI:29105"/>
        <label>1</label>
    </ligand>
</feature>
<feature type="binding site" evidence="1">
    <location>
        <position position="111"/>
    </location>
    <ligand>
        <name>Zn(2+)</name>
        <dbReference type="ChEBI" id="CHEBI:29105"/>
        <label>1</label>
    </ligand>
</feature>
<feature type="binding site" evidence="1">
    <location>
        <position position="146"/>
    </location>
    <ligand>
        <name>Zn(2+)</name>
        <dbReference type="ChEBI" id="CHEBI:29105"/>
        <label>1</label>
    </ligand>
</feature>
<feature type="binding site" evidence="1">
    <location>
        <position position="146"/>
    </location>
    <ligand>
        <name>Zn(2+)</name>
        <dbReference type="ChEBI" id="CHEBI:29105"/>
        <label>2</label>
    </ligand>
</feature>
<feature type="binding site" evidence="1">
    <location>
        <position position="180"/>
    </location>
    <ligand>
        <name>Zn(2+)</name>
        <dbReference type="ChEBI" id="CHEBI:29105"/>
        <label>2</label>
    </ligand>
</feature>
<feature type="binding site" evidence="1">
    <location>
        <position position="183"/>
    </location>
    <ligand>
        <name>Zn(2+)</name>
        <dbReference type="ChEBI" id="CHEBI:29105"/>
        <label>3</label>
    </ligand>
</feature>
<feature type="binding site" evidence="1">
    <location>
        <position position="215"/>
    </location>
    <ligand>
        <name>Zn(2+)</name>
        <dbReference type="ChEBI" id="CHEBI:29105"/>
        <label>2</label>
    </ligand>
</feature>
<feature type="binding site" evidence="1">
    <location>
        <position position="228"/>
    </location>
    <ligand>
        <name>Zn(2+)</name>
        <dbReference type="ChEBI" id="CHEBI:29105"/>
        <label>3</label>
    </ligand>
</feature>
<feature type="binding site" evidence="1">
    <location>
        <position position="230"/>
    </location>
    <ligand>
        <name>Zn(2+)</name>
        <dbReference type="ChEBI" id="CHEBI:29105"/>
        <label>3</label>
    </ligand>
</feature>
<feature type="binding site" evidence="1">
    <location>
        <position position="260"/>
    </location>
    <ligand>
        <name>Zn(2+)</name>
        <dbReference type="ChEBI" id="CHEBI:29105"/>
        <label>2</label>
    </ligand>
</feature>
<proteinExistence type="inferred from homology"/>
<name>END4_BACCR</name>
<gene>
    <name evidence="1" type="primary">nfo</name>
    <name type="ordered locus">BC_4282</name>
</gene>
<sequence>MLKIGSHVSMSGKKMLLAASEEAVSYGATTFMIYTGAPQNTRRKPIEELNIEAGRKHMELNGIEEIIVHAPYIINVGNTTKPETFQLGVDFLRMEIERTSALGVAKQIVLHPGAHVGAGADAGIQQIIKGLNEVLTPEQTVNIALETMAGKGTECGRSFEEIAKIIDGVKYNEKLSVCFDTCHTHDAGYDIVNDFDGVLNEFDKIVGIDRLQVLHINDSKNVRGAGKDRHENIGFGHIGYKALHHIVHHPQLMHVPKILETPYVGEDKKDKKPPYKLEIEMLKNGTFDEGLLEKIKAQ</sequence>
<protein>
    <recommendedName>
        <fullName evidence="1">Probable endonuclease 4</fullName>
        <ecNumber evidence="1">3.1.21.2</ecNumber>
    </recommendedName>
    <alternativeName>
        <fullName evidence="1">Endodeoxyribonuclease IV</fullName>
    </alternativeName>
    <alternativeName>
        <fullName evidence="1">Endonuclease IV</fullName>
    </alternativeName>
</protein>